<accession>O24699</accession>
<organism>
    <name type="scientific">Synechococcus sp. (strain ATCC 27144 / PCC 6301 / SAUG 1402/1)</name>
    <name type="common">Anacystis nidulans</name>
    <dbReference type="NCBI Taxonomy" id="269084"/>
    <lineage>
        <taxon>Bacteria</taxon>
        <taxon>Bacillati</taxon>
        <taxon>Cyanobacteriota</taxon>
        <taxon>Cyanophyceae</taxon>
        <taxon>Synechococcales</taxon>
        <taxon>Synechococcaceae</taxon>
        <taxon>Synechococcus</taxon>
    </lineage>
</organism>
<keyword id="KW-0687">Ribonucleoprotein</keyword>
<keyword id="KW-0689">Ribosomal protein</keyword>
<keyword id="KW-0694">RNA-binding</keyword>
<keyword id="KW-0699">rRNA-binding</keyword>
<proteinExistence type="inferred from homology"/>
<sequence length="121" mass="13318">MIQQETYLNVADNSGARKLMCIRVLGSNRRYAGVGDVIIAVVKDALPNMPVKKSDVVRAVVVRTKKSLRRDSGNVIRFDDNAAVIINADGNPRGTRVFGPVARELRDRNFTKIVSLAPEVI</sequence>
<reference key="1">
    <citation type="journal article" date="1997" name="Gene">
        <title>Organization of a large gene cluster encoding ribosomal proteins in the cyanobacterium Synechococcus sp. strain PCC 6301: comparison of gene clusters among cyanobacteria, eubacteria and chloroplast genomes.</title>
        <authorList>
            <person name="Sugita M."/>
            <person name="Sugishita H."/>
            <person name="Fujishiro T."/>
            <person name="Tsuboi M."/>
            <person name="Sugita C."/>
            <person name="Endo T."/>
            <person name="Sugiura M."/>
        </authorList>
    </citation>
    <scope>NUCLEOTIDE SEQUENCE [GENOMIC DNA]</scope>
</reference>
<reference key="2">
    <citation type="journal article" date="2007" name="Photosyn. Res.">
        <title>Complete nucleotide sequence of the freshwater unicellular cyanobacterium Synechococcus elongatus PCC 6301 chromosome: gene content and organization.</title>
        <authorList>
            <person name="Sugita C."/>
            <person name="Ogata K."/>
            <person name="Shikata M."/>
            <person name="Jikuya H."/>
            <person name="Takano J."/>
            <person name="Furumichi M."/>
            <person name="Kanehisa M."/>
            <person name="Omata T."/>
            <person name="Sugiura M."/>
            <person name="Sugita M."/>
        </authorList>
    </citation>
    <scope>NUCLEOTIDE SEQUENCE [LARGE SCALE GENOMIC DNA]</scope>
    <source>
        <strain>ATCC 27144 / PCC 6301 / SAUG 1402/1</strain>
    </source>
</reference>
<evidence type="ECO:0000255" key="1">
    <source>
        <dbReference type="HAMAP-Rule" id="MF_01367"/>
    </source>
</evidence>
<evidence type="ECO:0000305" key="2"/>
<name>RL14_SYNP6</name>
<feature type="chain" id="PRO_0000128562" description="Large ribosomal subunit protein uL14">
    <location>
        <begin position="1"/>
        <end position="121"/>
    </location>
</feature>
<comment type="function">
    <text evidence="1">Binds to 23S rRNA. Forms part of two intersubunit bridges in the 70S ribosome.</text>
</comment>
<comment type="subunit">
    <text evidence="1">Part of the 50S ribosomal subunit. Forms a cluster with proteins L3 and L19. In the 70S ribosome, L14 and L19 interact and together make contacts with the 16S rRNA in bridges B5 and B8.</text>
</comment>
<comment type="similarity">
    <text evidence="1">Belongs to the universal ribosomal protein uL14 family.</text>
</comment>
<dbReference type="EMBL" id="AB000111">
    <property type="protein sequence ID" value="BAA22459.1"/>
    <property type="molecule type" value="Genomic_DNA"/>
</dbReference>
<dbReference type="EMBL" id="AP008231">
    <property type="protein sequence ID" value="BAD80065.1"/>
    <property type="molecule type" value="Genomic_DNA"/>
</dbReference>
<dbReference type="RefSeq" id="WP_011244185.1">
    <property type="nucleotide sequence ID" value="NZ_CP085785.1"/>
</dbReference>
<dbReference type="SMR" id="O24699"/>
<dbReference type="GeneID" id="72431105"/>
<dbReference type="KEGG" id="syc:syc1875_d"/>
<dbReference type="eggNOG" id="COG0093">
    <property type="taxonomic scope" value="Bacteria"/>
</dbReference>
<dbReference type="Proteomes" id="UP000001175">
    <property type="component" value="Chromosome"/>
</dbReference>
<dbReference type="GO" id="GO:0022625">
    <property type="term" value="C:cytosolic large ribosomal subunit"/>
    <property type="evidence" value="ECO:0007669"/>
    <property type="project" value="TreeGrafter"/>
</dbReference>
<dbReference type="GO" id="GO:0070180">
    <property type="term" value="F:large ribosomal subunit rRNA binding"/>
    <property type="evidence" value="ECO:0007669"/>
    <property type="project" value="TreeGrafter"/>
</dbReference>
<dbReference type="GO" id="GO:0003735">
    <property type="term" value="F:structural constituent of ribosome"/>
    <property type="evidence" value="ECO:0007669"/>
    <property type="project" value="InterPro"/>
</dbReference>
<dbReference type="GO" id="GO:0006412">
    <property type="term" value="P:translation"/>
    <property type="evidence" value="ECO:0007669"/>
    <property type="project" value="UniProtKB-UniRule"/>
</dbReference>
<dbReference type="CDD" id="cd00337">
    <property type="entry name" value="Ribosomal_uL14"/>
    <property type="match status" value="1"/>
</dbReference>
<dbReference type="FunFam" id="2.40.150.20:FF:000001">
    <property type="entry name" value="50S ribosomal protein L14"/>
    <property type="match status" value="1"/>
</dbReference>
<dbReference type="Gene3D" id="2.40.150.20">
    <property type="entry name" value="Ribosomal protein L14"/>
    <property type="match status" value="1"/>
</dbReference>
<dbReference type="HAMAP" id="MF_01367">
    <property type="entry name" value="Ribosomal_uL14"/>
    <property type="match status" value="1"/>
</dbReference>
<dbReference type="InterPro" id="IPR000218">
    <property type="entry name" value="Ribosomal_uL14"/>
</dbReference>
<dbReference type="InterPro" id="IPR005745">
    <property type="entry name" value="Ribosomal_uL14_bac-type"/>
</dbReference>
<dbReference type="InterPro" id="IPR019972">
    <property type="entry name" value="Ribosomal_uL14_CS"/>
</dbReference>
<dbReference type="InterPro" id="IPR036853">
    <property type="entry name" value="Ribosomal_uL14_sf"/>
</dbReference>
<dbReference type="NCBIfam" id="TIGR01067">
    <property type="entry name" value="rplN_bact"/>
    <property type="match status" value="1"/>
</dbReference>
<dbReference type="PANTHER" id="PTHR11761">
    <property type="entry name" value="50S/60S RIBOSOMAL PROTEIN L14/L23"/>
    <property type="match status" value="1"/>
</dbReference>
<dbReference type="PANTHER" id="PTHR11761:SF3">
    <property type="entry name" value="LARGE RIBOSOMAL SUBUNIT PROTEIN UL14M"/>
    <property type="match status" value="1"/>
</dbReference>
<dbReference type="Pfam" id="PF00238">
    <property type="entry name" value="Ribosomal_L14"/>
    <property type="match status" value="1"/>
</dbReference>
<dbReference type="SMART" id="SM01374">
    <property type="entry name" value="Ribosomal_L14"/>
    <property type="match status" value="1"/>
</dbReference>
<dbReference type="SUPFAM" id="SSF50193">
    <property type="entry name" value="Ribosomal protein L14"/>
    <property type="match status" value="1"/>
</dbReference>
<dbReference type="PROSITE" id="PS00049">
    <property type="entry name" value="RIBOSOMAL_L14"/>
    <property type="match status" value="1"/>
</dbReference>
<protein>
    <recommendedName>
        <fullName evidence="1">Large ribosomal subunit protein uL14</fullName>
    </recommendedName>
    <alternativeName>
        <fullName evidence="2">50S ribosomal protein L14</fullName>
    </alternativeName>
</protein>
<gene>
    <name evidence="1" type="primary">rplN</name>
    <name evidence="1" type="synonym">rpl14</name>
    <name type="ordered locus">syc1875_d</name>
</gene>